<sequence length="224" mass="24928">MDEAIIVDAEFVAPVGTTAGEFVPIDRAPAAGLLLLVAFVVLYAKVISKLGKPAIQEFLWEIITRIVPSKQLRRRKEAQLRAIEVHTQRSNTSSQDQFAKWAKLDREYGKLKVEIEDINNLLTASKARFFTIISSAIFLSTTGMKMFLRIKHRKAAIFWLPKNAFPYPIEYILSFSSAPLGSVSVSAWLMICDAAMDLIVTIFVALVVGVIGMLRSNKVKPKTA</sequence>
<keyword id="KW-0175">Coiled coil</keyword>
<keyword id="KW-0256">Endoplasmic reticulum</keyword>
<keyword id="KW-0931">ER-Golgi transport</keyword>
<keyword id="KW-0333">Golgi apparatus</keyword>
<keyword id="KW-0472">Membrane</keyword>
<keyword id="KW-1185">Reference proteome</keyword>
<keyword id="KW-0812">Transmembrane</keyword>
<keyword id="KW-1133">Transmembrane helix</keyword>
<keyword id="KW-0813">Transport</keyword>
<organism>
    <name type="scientific">Yarrowia lipolytica (strain CLIB 122 / E 150)</name>
    <name type="common">Yeast</name>
    <name type="synonym">Candida lipolytica</name>
    <dbReference type="NCBI Taxonomy" id="284591"/>
    <lineage>
        <taxon>Eukaryota</taxon>
        <taxon>Fungi</taxon>
        <taxon>Dikarya</taxon>
        <taxon>Ascomycota</taxon>
        <taxon>Saccharomycotina</taxon>
        <taxon>Dipodascomycetes</taxon>
        <taxon>Dipodascales</taxon>
        <taxon>Dipodascales incertae sedis</taxon>
        <taxon>Yarrowia</taxon>
    </lineage>
</organism>
<proteinExistence type="inferred from homology"/>
<comment type="function">
    <text evidence="1">Required for the post-translational delivery of tail-anchored (TA) proteins to the endoplasmic reticulum. Together with GET2, acts as a membrane receptor for soluble GET3, which recognizes and selectively binds the transmembrane domain of TA proteins in the cytosol. The GET complex cooperates with the HDEL receptor ERD2 to mediate the ATP-dependent retrieval of resident ER proteins that contain a C-terminal H-D-E-L retention signal from the Golgi to the ER.</text>
</comment>
<comment type="subunit">
    <text evidence="1">Component of the Golgi to ER traffic (GET) complex, which is composed of GET1, GET2 and GET3. Within the complex, GET1 and GET2 form a heterotetramer which is stabilized by phosphatidylinositol binding and which binds to the GET3 homodimer.</text>
</comment>
<comment type="subcellular location">
    <subcellularLocation>
        <location evidence="1">Endoplasmic reticulum membrane</location>
        <topology evidence="1">Multi-pass membrane protein</topology>
    </subcellularLocation>
    <subcellularLocation>
        <location evidence="1">Golgi apparatus membrane</location>
        <topology evidence="1">Multi-pass membrane protein</topology>
    </subcellularLocation>
</comment>
<comment type="similarity">
    <text evidence="1">Belongs to the WRB/GET1 family.</text>
</comment>
<name>GET1_YARLI</name>
<reference key="1">
    <citation type="journal article" date="2004" name="Nature">
        <title>Genome evolution in yeasts.</title>
        <authorList>
            <person name="Dujon B."/>
            <person name="Sherman D."/>
            <person name="Fischer G."/>
            <person name="Durrens P."/>
            <person name="Casaregola S."/>
            <person name="Lafontaine I."/>
            <person name="de Montigny J."/>
            <person name="Marck C."/>
            <person name="Neuveglise C."/>
            <person name="Talla E."/>
            <person name="Goffard N."/>
            <person name="Frangeul L."/>
            <person name="Aigle M."/>
            <person name="Anthouard V."/>
            <person name="Babour A."/>
            <person name="Barbe V."/>
            <person name="Barnay S."/>
            <person name="Blanchin S."/>
            <person name="Beckerich J.-M."/>
            <person name="Beyne E."/>
            <person name="Bleykasten C."/>
            <person name="Boisrame A."/>
            <person name="Boyer J."/>
            <person name="Cattolico L."/>
            <person name="Confanioleri F."/>
            <person name="de Daruvar A."/>
            <person name="Despons L."/>
            <person name="Fabre E."/>
            <person name="Fairhead C."/>
            <person name="Ferry-Dumazet H."/>
            <person name="Groppi A."/>
            <person name="Hantraye F."/>
            <person name="Hennequin C."/>
            <person name="Jauniaux N."/>
            <person name="Joyet P."/>
            <person name="Kachouri R."/>
            <person name="Kerrest A."/>
            <person name="Koszul R."/>
            <person name="Lemaire M."/>
            <person name="Lesur I."/>
            <person name="Ma L."/>
            <person name="Muller H."/>
            <person name="Nicaud J.-M."/>
            <person name="Nikolski M."/>
            <person name="Oztas S."/>
            <person name="Ozier-Kalogeropoulos O."/>
            <person name="Pellenz S."/>
            <person name="Potier S."/>
            <person name="Richard G.-F."/>
            <person name="Straub M.-L."/>
            <person name="Suleau A."/>
            <person name="Swennen D."/>
            <person name="Tekaia F."/>
            <person name="Wesolowski-Louvel M."/>
            <person name="Westhof E."/>
            <person name="Wirth B."/>
            <person name="Zeniou-Meyer M."/>
            <person name="Zivanovic Y."/>
            <person name="Bolotin-Fukuhara M."/>
            <person name="Thierry A."/>
            <person name="Bouchier C."/>
            <person name="Caudron B."/>
            <person name="Scarpelli C."/>
            <person name="Gaillardin C."/>
            <person name="Weissenbach J."/>
            <person name="Wincker P."/>
            <person name="Souciet J.-L."/>
        </authorList>
    </citation>
    <scope>NUCLEOTIDE SEQUENCE [LARGE SCALE GENOMIC DNA]</scope>
    <source>
        <strain>CLIB 122 / E 150</strain>
    </source>
</reference>
<dbReference type="EMBL" id="CR382131">
    <property type="protein sequence ID" value="CAG79802.1"/>
    <property type="molecule type" value="Genomic_DNA"/>
</dbReference>
<dbReference type="RefSeq" id="XP_504207.1">
    <property type="nucleotide sequence ID" value="XM_504207.1"/>
</dbReference>
<dbReference type="SMR" id="Q6C555"/>
<dbReference type="STRING" id="284591.Q6C555"/>
<dbReference type="EnsemblFungi" id="CAG79802">
    <property type="protein sequence ID" value="CAG79802"/>
    <property type="gene ID" value="YALI0_E20889g"/>
</dbReference>
<dbReference type="KEGG" id="yli:2911843"/>
<dbReference type="VEuPathDB" id="FungiDB:YALI0_E20889g"/>
<dbReference type="HOGENOM" id="CLU_089418_1_0_1"/>
<dbReference type="InParanoid" id="Q6C555"/>
<dbReference type="OMA" id="AEWIISF"/>
<dbReference type="OrthoDB" id="100376at4891"/>
<dbReference type="Proteomes" id="UP000001300">
    <property type="component" value="Chromosome E"/>
</dbReference>
<dbReference type="GO" id="GO:0005789">
    <property type="term" value="C:endoplasmic reticulum membrane"/>
    <property type="evidence" value="ECO:0007669"/>
    <property type="project" value="UniProtKB-SubCell"/>
</dbReference>
<dbReference type="GO" id="GO:0043529">
    <property type="term" value="C:GET complex"/>
    <property type="evidence" value="ECO:0000318"/>
    <property type="project" value="GO_Central"/>
</dbReference>
<dbReference type="GO" id="GO:0000139">
    <property type="term" value="C:Golgi membrane"/>
    <property type="evidence" value="ECO:0007669"/>
    <property type="project" value="UniProtKB-SubCell"/>
</dbReference>
<dbReference type="GO" id="GO:0043495">
    <property type="term" value="F:protein-membrane adaptor activity"/>
    <property type="evidence" value="ECO:0000318"/>
    <property type="project" value="GO_Central"/>
</dbReference>
<dbReference type="GO" id="GO:0071816">
    <property type="term" value="P:tail-anchored membrane protein insertion into ER membrane"/>
    <property type="evidence" value="ECO:0000318"/>
    <property type="project" value="GO_Central"/>
</dbReference>
<dbReference type="GO" id="GO:0016192">
    <property type="term" value="P:vesicle-mediated transport"/>
    <property type="evidence" value="ECO:0007669"/>
    <property type="project" value="UniProtKB-KW"/>
</dbReference>
<dbReference type="Gene3D" id="1.10.287.660">
    <property type="entry name" value="Helix hairpin bin"/>
    <property type="match status" value="1"/>
</dbReference>
<dbReference type="HAMAP" id="MF_03113">
    <property type="entry name" value="Get1"/>
    <property type="match status" value="1"/>
</dbReference>
<dbReference type="InterPro" id="IPR028945">
    <property type="entry name" value="Get1"/>
</dbReference>
<dbReference type="InterPro" id="IPR027538">
    <property type="entry name" value="Get1_fungi"/>
</dbReference>
<dbReference type="InterPro" id="IPR029012">
    <property type="entry name" value="Helix_hairpin_bin_sf"/>
</dbReference>
<dbReference type="PANTHER" id="PTHR42650:SF1">
    <property type="entry name" value="GUIDED ENTRY OF TAIL-ANCHORED PROTEINS FACTOR 1"/>
    <property type="match status" value="1"/>
</dbReference>
<dbReference type="PANTHER" id="PTHR42650">
    <property type="entry name" value="TAIL-ANCHORED PROTEIN INSERTION RECEPTOR WRB"/>
    <property type="match status" value="1"/>
</dbReference>
<dbReference type="Pfam" id="PF04420">
    <property type="entry name" value="CHD5"/>
    <property type="match status" value="1"/>
</dbReference>
<evidence type="ECO:0000255" key="1">
    <source>
        <dbReference type="HAMAP-Rule" id="MF_03113"/>
    </source>
</evidence>
<gene>
    <name evidence="1" type="primary">GET1</name>
    <name type="ordered locus">YALI0E20889g</name>
</gene>
<feature type="chain" id="PRO_0000388622" description="Golgi to ER traffic protein 1">
    <location>
        <begin position="1"/>
        <end position="224"/>
    </location>
</feature>
<feature type="topological domain" description="Lumenal" evidence="1">
    <location>
        <begin position="1"/>
        <end position="33"/>
    </location>
</feature>
<feature type="transmembrane region" description="Helical" evidence="1">
    <location>
        <begin position="34"/>
        <end position="53"/>
    </location>
</feature>
<feature type="topological domain" description="Cytoplasmic" evidence="1">
    <location>
        <begin position="54"/>
        <end position="137"/>
    </location>
</feature>
<feature type="transmembrane region" description="Helical" evidence="1">
    <location>
        <begin position="138"/>
        <end position="158"/>
    </location>
</feature>
<feature type="topological domain" description="Lumenal" evidence="1">
    <location>
        <begin position="159"/>
        <end position="182"/>
    </location>
</feature>
<feature type="transmembrane region" description="Helical" evidence="1">
    <location>
        <begin position="183"/>
        <end position="199"/>
    </location>
</feature>
<feature type="topological domain" description="Cytoplasmic" evidence="1">
    <location>
        <begin position="200"/>
        <end position="224"/>
    </location>
</feature>
<feature type="coiled-coil region" evidence="1">
    <location>
        <begin position="102"/>
        <end position="124"/>
    </location>
</feature>
<protein>
    <recommendedName>
        <fullName evidence="1">Golgi to ER traffic protein 1</fullName>
    </recommendedName>
    <alternativeName>
        <fullName evidence="1">Guided entry of tail-anchored proteins 1</fullName>
    </alternativeName>
</protein>
<accession>Q6C555</accession>